<gene>
    <name evidence="1" type="primary">rplE</name>
    <name type="ordered locus">Shewmr4_0211</name>
</gene>
<protein>
    <recommendedName>
        <fullName evidence="1">Large ribosomal subunit protein uL5</fullName>
    </recommendedName>
    <alternativeName>
        <fullName evidence="2">50S ribosomal protein L5</fullName>
    </alternativeName>
</protein>
<organism>
    <name type="scientific">Shewanella sp. (strain MR-4)</name>
    <dbReference type="NCBI Taxonomy" id="60480"/>
    <lineage>
        <taxon>Bacteria</taxon>
        <taxon>Pseudomonadati</taxon>
        <taxon>Pseudomonadota</taxon>
        <taxon>Gammaproteobacteria</taxon>
        <taxon>Alteromonadales</taxon>
        <taxon>Shewanellaceae</taxon>
        <taxon>Shewanella</taxon>
    </lineage>
</organism>
<dbReference type="EMBL" id="CP000446">
    <property type="protein sequence ID" value="ABI37292.1"/>
    <property type="molecule type" value="Genomic_DNA"/>
</dbReference>
<dbReference type="RefSeq" id="WP_011621029.1">
    <property type="nucleotide sequence ID" value="NC_008321.1"/>
</dbReference>
<dbReference type="SMR" id="Q0HNS5"/>
<dbReference type="KEGG" id="she:Shewmr4_0211"/>
<dbReference type="HOGENOM" id="CLU_061015_2_1_6"/>
<dbReference type="GO" id="GO:1990904">
    <property type="term" value="C:ribonucleoprotein complex"/>
    <property type="evidence" value="ECO:0007669"/>
    <property type="project" value="UniProtKB-KW"/>
</dbReference>
<dbReference type="GO" id="GO:0005840">
    <property type="term" value="C:ribosome"/>
    <property type="evidence" value="ECO:0007669"/>
    <property type="project" value="UniProtKB-KW"/>
</dbReference>
<dbReference type="GO" id="GO:0019843">
    <property type="term" value="F:rRNA binding"/>
    <property type="evidence" value="ECO:0007669"/>
    <property type="project" value="UniProtKB-UniRule"/>
</dbReference>
<dbReference type="GO" id="GO:0003735">
    <property type="term" value="F:structural constituent of ribosome"/>
    <property type="evidence" value="ECO:0007669"/>
    <property type="project" value="InterPro"/>
</dbReference>
<dbReference type="GO" id="GO:0000049">
    <property type="term" value="F:tRNA binding"/>
    <property type="evidence" value="ECO:0007669"/>
    <property type="project" value="UniProtKB-UniRule"/>
</dbReference>
<dbReference type="GO" id="GO:0006412">
    <property type="term" value="P:translation"/>
    <property type="evidence" value="ECO:0007669"/>
    <property type="project" value="UniProtKB-UniRule"/>
</dbReference>
<dbReference type="FunFam" id="3.30.1440.10:FF:000001">
    <property type="entry name" value="50S ribosomal protein L5"/>
    <property type="match status" value="1"/>
</dbReference>
<dbReference type="Gene3D" id="3.30.1440.10">
    <property type="match status" value="1"/>
</dbReference>
<dbReference type="HAMAP" id="MF_01333_B">
    <property type="entry name" value="Ribosomal_uL5_B"/>
    <property type="match status" value="1"/>
</dbReference>
<dbReference type="InterPro" id="IPR002132">
    <property type="entry name" value="Ribosomal_uL5"/>
</dbReference>
<dbReference type="InterPro" id="IPR020930">
    <property type="entry name" value="Ribosomal_uL5_bac-type"/>
</dbReference>
<dbReference type="InterPro" id="IPR031309">
    <property type="entry name" value="Ribosomal_uL5_C"/>
</dbReference>
<dbReference type="InterPro" id="IPR020929">
    <property type="entry name" value="Ribosomal_uL5_CS"/>
</dbReference>
<dbReference type="InterPro" id="IPR022803">
    <property type="entry name" value="Ribosomal_uL5_dom_sf"/>
</dbReference>
<dbReference type="InterPro" id="IPR031310">
    <property type="entry name" value="Ribosomal_uL5_N"/>
</dbReference>
<dbReference type="NCBIfam" id="NF000585">
    <property type="entry name" value="PRK00010.1"/>
    <property type="match status" value="1"/>
</dbReference>
<dbReference type="PANTHER" id="PTHR11994">
    <property type="entry name" value="60S RIBOSOMAL PROTEIN L11-RELATED"/>
    <property type="match status" value="1"/>
</dbReference>
<dbReference type="Pfam" id="PF00281">
    <property type="entry name" value="Ribosomal_L5"/>
    <property type="match status" value="1"/>
</dbReference>
<dbReference type="Pfam" id="PF00673">
    <property type="entry name" value="Ribosomal_L5_C"/>
    <property type="match status" value="1"/>
</dbReference>
<dbReference type="PIRSF" id="PIRSF002161">
    <property type="entry name" value="Ribosomal_L5"/>
    <property type="match status" value="1"/>
</dbReference>
<dbReference type="SUPFAM" id="SSF55282">
    <property type="entry name" value="RL5-like"/>
    <property type="match status" value="1"/>
</dbReference>
<dbReference type="PROSITE" id="PS00358">
    <property type="entry name" value="RIBOSOMAL_L5"/>
    <property type="match status" value="1"/>
</dbReference>
<sequence length="179" mass="20218">MAKLHDKYQETVVAELTKKFGYTSVMQVPRIEKITLNMGVGEAVADKKVMEHAVRDMTAIAGQKPVVTVARKSVAGFKIREGYPIGCKVTLRGERMWEFLERLVDIAIPRIRDFRGLSAKAFDGRGNYAMGVREQIIFPEIDYDKIDKIRGMDIVITTSANTDEEGRALLDAFNFPFKK</sequence>
<keyword id="KW-0687">Ribonucleoprotein</keyword>
<keyword id="KW-0689">Ribosomal protein</keyword>
<keyword id="KW-0694">RNA-binding</keyword>
<keyword id="KW-0699">rRNA-binding</keyword>
<keyword id="KW-0820">tRNA-binding</keyword>
<evidence type="ECO:0000255" key="1">
    <source>
        <dbReference type="HAMAP-Rule" id="MF_01333"/>
    </source>
</evidence>
<evidence type="ECO:0000305" key="2"/>
<reference key="1">
    <citation type="submission" date="2006-08" db="EMBL/GenBank/DDBJ databases">
        <title>Complete sequence of Shewanella sp. MR-4.</title>
        <authorList>
            <consortium name="US DOE Joint Genome Institute"/>
            <person name="Copeland A."/>
            <person name="Lucas S."/>
            <person name="Lapidus A."/>
            <person name="Barry K."/>
            <person name="Detter J.C."/>
            <person name="Glavina del Rio T."/>
            <person name="Hammon N."/>
            <person name="Israni S."/>
            <person name="Dalin E."/>
            <person name="Tice H."/>
            <person name="Pitluck S."/>
            <person name="Kiss H."/>
            <person name="Brettin T."/>
            <person name="Bruce D."/>
            <person name="Han C."/>
            <person name="Tapia R."/>
            <person name="Gilna P."/>
            <person name="Schmutz J."/>
            <person name="Larimer F."/>
            <person name="Land M."/>
            <person name="Hauser L."/>
            <person name="Kyrpides N."/>
            <person name="Mikhailova N."/>
            <person name="Nealson K."/>
            <person name="Konstantinidis K."/>
            <person name="Klappenbach J."/>
            <person name="Tiedje J."/>
            <person name="Richardson P."/>
        </authorList>
    </citation>
    <scope>NUCLEOTIDE SEQUENCE [LARGE SCALE GENOMIC DNA]</scope>
    <source>
        <strain>MR-4</strain>
    </source>
</reference>
<accession>Q0HNS5</accession>
<name>RL5_SHESM</name>
<proteinExistence type="inferred from homology"/>
<comment type="function">
    <text evidence="1">This is one of the proteins that bind and probably mediate the attachment of the 5S RNA into the large ribosomal subunit, where it forms part of the central protuberance. In the 70S ribosome it contacts protein S13 of the 30S subunit (bridge B1b), connecting the 2 subunits; this bridge is implicated in subunit movement. Contacts the P site tRNA; the 5S rRNA and some of its associated proteins might help stabilize positioning of ribosome-bound tRNAs.</text>
</comment>
<comment type="subunit">
    <text evidence="1">Part of the 50S ribosomal subunit; part of the 5S rRNA/L5/L18/L25 subcomplex. Contacts the 5S rRNA and the P site tRNA. Forms a bridge to the 30S subunit in the 70S ribosome.</text>
</comment>
<comment type="similarity">
    <text evidence="1">Belongs to the universal ribosomal protein uL5 family.</text>
</comment>
<feature type="chain" id="PRO_1000052827" description="Large ribosomal subunit protein uL5">
    <location>
        <begin position="1"/>
        <end position="179"/>
    </location>
</feature>